<keyword id="KW-0963">Cytoplasm</keyword>
<keyword id="KW-0671">Queuosine biosynthesis</keyword>
<keyword id="KW-1185">Reference proteome</keyword>
<keyword id="KW-0949">S-adenosyl-L-methionine</keyword>
<keyword id="KW-0808">Transferase</keyword>
<name>QUEA_AZOSB</name>
<comment type="function">
    <text evidence="1">Transfers and isomerizes the ribose moiety from AdoMet to the 7-aminomethyl group of 7-deazaguanine (preQ1-tRNA) to give epoxyqueuosine (oQ-tRNA).</text>
</comment>
<comment type="catalytic activity">
    <reaction evidence="1">
        <text>7-aminomethyl-7-carbaguanosine(34) in tRNA + S-adenosyl-L-methionine = epoxyqueuosine(34) in tRNA + adenine + L-methionine + 2 H(+)</text>
        <dbReference type="Rhea" id="RHEA:32155"/>
        <dbReference type="Rhea" id="RHEA-COMP:10342"/>
        <dbReference type="Rhea" id="RHEA-COMP:18582"/>
        <dbReference type="ChEBI" id="CHEBI:15378"/>
        <dbReference type="ChEBI" id="CHEBI:16708"/>
        <dbReference type="ChEBI" id="CHEBI:57844"/>
        <dbReference type="ChEBI" id="CHEBI:59789"/>
        <dbReference type="ChEBI" id="CHEBI:82833"/>
        <dbReference type="ChEBI" id="CHEBI:194443"/>
        <dbReference type="EC" id="2.4.99.17"/>
    </reaction>
</comment>
<comment type="pathway">
    <text evidence="1">tRNA modification; tRNA-queuosine biosynthesis.</text>
</comment>
<comment type="subunit">
    <text evidence="1">Monomer.</text>
</comment>
<comment type="subcellular location">
    <subcellularLocation>
        <location evidence="1">Cytoplasm</location>
    </subcellularLocation>
</comment>
<comment type="similarity">
    <text evidence="1">Belongs to the QueA family.</text>
</comment>
<dbReference type="EC" id="2.4.99.17" evidence="1"/>
<dbReference type="EMBL" id="AM406670">
    <property type="protein sequence ID" value="CAL93525.1"/>
    <property type="molecule type" value="Genomic_DNA"/>
</dbReference>
<dbReference type="RefSeq" id="WP_011764642.1">
    <property type="nucleotide sequence ID" value="NC_008702.1"/>
</dbReference>
<dbReference type="SMR" id="A1K3X0"/>
<dbReference type="STRING" id="62928.azo0908"/>
<dbReference type="KEGG" id="azo:azo0908"/>
<dbReference type="eggNOG" id="COG0809">
    <property type="taxonomic scope" value="Bacteria"/>
</dbReference>
<dbReference type="HOGENOM" id="CLU_039110_1_0_4"/>
<dbReference type="UniPathway" id="UPA00392"/>
<dbReference type="Proteomes" id="UP000002588">
    <property type="component" value="Chromosome"/>
</dbReference>
<dbReference type="GO" id="GO:0005737">
    <property type="term" value="C:cytoplasm"/>
    <property type="evidence" value="ECO:0007669"/>
    <property type="project" value="UniProtKB-SubCell"/>
</dbReference>
<dbReference type="GO" id="GO:0051075">
    <property type="term" value="F:S-adenosylmethionine:tRNA ribosyltransferase-isomerase activity"/>
    <property type="evidence" value="ECO:0007669"/>
    <property type="project" value="UniProtKB-EC"/>
</dbReference>
<dbReference type="GO" id="GO:0008616">
    <property type="term" value="P:queuosine biosynthetic process"/>
    <property type="evidence" value="ECO:0007669"/>
    <property type="project" value="UniProtKB-UniRule"/>
</dbReference>
<dbReference type="GO" id="GO:0002099">
    <property type="term" value="P:tRNA wobble guanine modification"/>
    <property type="evidence" value="ECO:0007669"/>
    <property type="project" value="TreeGrafter"/>
</dbReference>
<dbReference type="FunFam" id="3.40.1780.10:FF:000001">
    <property type="entry name" value="S-adenosylmethionine:tRNA ribosyltransferase-isomerase"/>
    <property type="match status" value="1"/>
</dbReference>
<dbReference type="Gene3D" id="2.40.10.240">
    <property type="entry name" value="QueA-like"/>
    <property type="match status" value="1"/>
</dbReference>
<dbReference type="Gene3D" id="3.40.1780.10">
    <property type="entry name" value="QueA-like"/>
    <property type="match status" value="1"/>
</dbReference>
<dbReference type="HAMAP" id="MF_00113">
    <property type="entry name" value="QueA"/>
    <property type="match status" value="1"/>
</dbReference>
<dbReference type="InterPro" id="IPR003699">
    <property type="entry name" value="QueA"/>
</dbReference>
<dbReference type="InterPro" id="IPR042118">
    <property type="entry name" value="QueA_dom1"/>
</dbReference>
<dbReference type="InterPro" id="IPR042119">
    <property type="entry name" value="QueA_dom2"/>
</dbReference>
<dbReference type="InterPro" id="IPR036100">
    <property type="entry name" value="QueA_sf"/>
</dbReference>
<dbReference type="NCBIfam" id="NF001140">
    <property type="entry name" value="PRK00147.1"/>
    <property type="match status" value="1"/>
</dbReference>
<dbReference type="NCBIfam" id="TIGR00113">
    <property type="entry name" value="queA"/>
    <property type="match status" value="1"/>
</dbReference>
<dbReference type="PANTHER" id="PTHR30307">
    <property type="entry name" value="S-ADENOSYLMETHIONINE:TRNA RIBOSYLTRANSFERASE-ISOMERASE"/>
    <property type="match status" value="1"/>
</dbReference>
<dbReference type="PANTHER" id="PTHR30307:SF0">
    <property type="entry name" value="S-ADENOSYLMETHIONINE:TRNA RIBOSYLTRANSFERASE-ISOMERASE"/>
    <property type="match status" value="1"/>
</dbReference>
<dbReference type="Pfam" id="PF02547">
    <property type="entry name" value="Queuosine_synth"/>
    <property type="match status" value="1"/>
</dbReference>
<dbReference type="SUPFAM" id="SSF111337">
    <property type="entry name" value="QueA-like"/>
    <property type="match status" value="1"/>
</dbReference>
<reference key="1">
    <citation type="journal article" date="2006" name="Nat. Biotechnol.">
        <title>Complete genome of the mutualistic, N2-fixing grass endophyte Azoarcus sp. strain BH72.</title>
        <authorList>
            <person name="Krause A."/>
            <person name="Ramakumar A."/>
            <person name="Bartels D."/>
            <person name="Battistoni F."/>
            <person name="Bekel T."/>
            <person name="Boch J."/>
            <person name="Boehm M."/>
            <person name="Friedrich F."/>
            <person name="Hurek T."/>
            <person name="Krause L."/>
            <person name="Linke B."/>
            <person name="McHardy A.C."/>
            <person name="Sarkar A."/>
            <person name="Schneiker S."/>
            <person name="Syed A.A."/>
            <person name="Thauer R."/>
            <person name="Vorhoelter F.-J."/>
            <person name="Weidner S."/>
            <person name="Puehler A."/>
            <person name="Reinhold-Hurek B."/>
            <person name="Kaiser O."/>
            <person name="Goesmann A."/>
        </authorList>
    </citation>
    <scope>NUCLEOTIDE SEQUENCE [LARGE SCALE GENOMIC DNA]</scope>
    <source>
        <strain>BH72</strain>
    </source>
</reference>
<feature type="chain" id="PRO_1000015177" description="S-adenosylmethionine:tRNA ribosyltransferase-isomerase">
    <location>
        <begin position="1"/>
        <end position="345"/>
    </location>
</feature>
<evidence type="ECO:0000255" key="1">
    <source>
        <dbReference type="HAMAP-Rule" id="MF_00113"/>
    </source>
</evidence>
<accession>A1K3X0</accession>
<organism>
    <name type="scientific">Azoarcus sp. (strain BH72)</name>
    <dbReference type="NCBI Taxonomy" id="418699"/>
    <lineage>
        <taxon>Bacteria</taxon>
        <taxon>Pseudomonadati</taxon>
        <taxon>Pseudomonadota</taxon>
        <taxon>Betaproteobacteria</taxon>
        <taxon>Rhodocyclales</taxon>
        <taxon>Zoogloeaceae</taxon>
        <taxon>Azoarcus</taxon>
    </lineage>
</organism>
<sequence length="345" mass="37554">MTLSLQDFDYDLPPDLIAQAPLAERSASRLLVVDGDVLADRRFVDLPDFIRPGDLLVFNDTRVLHARLFGVKATGGQVEVLVERPIGAHEALAQIRASKSPKPGSTLRLADAVDVTVLGRSGEFFHLRFPDDENVVDVLERYGKLPLPPYIQRAAGDADEARYQTVFARAPGSVAAPTAGLHFDDAVLDRLRARGAGCAWVTLHVGAGTFQPVRVDDLAQHRMHSERYVIPQETVEAIARTRANGGRVVAVGTTSMRALEAAAQAGPLAAGSGETDIFILPGFRFRVADMLVTNFHLPKSTLLMLVSAFSGTDVIRRAYAHAVASRYRFFSYGDAMLLTRNDHAI</sequence>
<proteinExistence type="inferred from homology"/>
<gene>
    <name evidence="1" type="primary">queA</name>
    <name type="ordered locus">azo0908</name>
</gene>
<protein>
    <recommendedName>
        <fullName evidence="1">S-adenosylmethionine:tRNA ribosyltransferase-isomerase</fullName>
        <ecNumber evidence="1">2.4.99.17</ecNumber>
    </recommendedName>
    <alternativeName>
        <fullName evidence="1">Queuosine biosynthesis protein QueA</fullName>
    </alternativeName>
</protein>